<evidence type="ECO:0000255" key="1">
    <source>
        <dbReference type="HAMAP-Rule" id="MF_00368"/>
    </source>
</evidence>
<evidence type="ECO:0000305" key="2"/>
<comment type="function">
    <text evidence="1">Forms part of the ribosomal stalk which helps the ribosome interact with GTP-bound translation factors. Is thus essential for accurate translation.</text>
</comment>
<comment type="subunit">
    <text evidence="1">Homodimer. Part of the ribosomal stalk of the 50S ribosomal subunit. Forms a multimeric L10(L12)X complex, where L10 forms an elongated spine to which 2 to 4 L12 dimers bind in a sequential fashion. Binds GTP-bound translation factors.</text>
</comment>
<comment type="similarity">
    <text evidence="1">Belongs to the bacterial ribosomal protein bL12 family.</text>
</comment>
<organism>
    <name type="scientific">Streptococcus pneumoniae (strain JJA)</name>
    <dbReference type="NCBI Taxonomy" id="488222"/>
    <lineage>
        <taxon>Bacteria</taxon>
        <taxon>Bacillati</taxon>
        <taxon>Bacillota</taxon>
        <taxon>Bacilli</taxon>
        <taxon>Lactobacillales</taxon>
        <taxon>Streptococcaceae</taxon>
        <taxon>Streptococcus</taxon>
    </lineage>
</organism>
<keyword id="KW-0687">Ribonucleoprotein</keyword>
<keyword id="KW-0689">Ribosomal protein</keyword>
<accession>C1CEU3</accession>
<dbReference type="EMBL" id="CP000919">
    <property type="protein sequence ID" value="ACO19274.1"/>
    <property type="molecule type" value="Genomic_DNA"/>
</dbReference>
<dbReference type="RefSeq" id="WP_001196960.1">
    <property type="nucleotide sequence ID" value="NC_012466.1"/>
</dbReference>
<dbReference type="SMR" id="C1CEU3"/>
<dbReference type="GeneID" id="45653386"/>
<dbReference type="KEGG" id="sjj:SPJ_1254"/>
<dbReference type="HOGENOM" id="CLU_086499_3_2_9"/>
<dbReference type="Proteomes" id="UP000002206">
    <property type="component" value="Chromosome"/>
</dbReference>
<dbReference type="GO" id="GO:0022625">
    <property type="term" value="C:cytosolic large ribosomal subunit"/>
    <property type="evidence" value="ECO:0007669"/>
    <property type="project" value="TreeGrafter"/>
</dbReference>
<dbReference type="GO" id="GO:0003729">
    <property type="term" value="F:mRNA binding"/>
    <property type="evidence" value="ECO:0007669"/>
    <property type="project" value="TreeGrafter"/>
</dbReference>
<dbReference type="GO" id="GO:0003735">
    <property type="term" value="F:structural constituent of ribosome"/>
    <property type="evidence" value="ECO:0007669"/>
    <property type="project" value="InterPro"/>
</dbReference>
<dbReference type="GO" id="GO:0006412">
    <property type="term" value="P:translation"/>
    <property type="evidence" value="ECO:0007669"/>
    <property type="project" value="UniProtKB-UniRule"/>
</dbReference>
<dbReference type="CDD" id="cd00387">
    <property type="entry name" value="Ribosomal_L7_L12"/>
    <property type="match status" value="1"/>
</dbReference>
<dbReference type="FunFam" id="1.20.5.710:FF:000002">
    <property type="entry name" value="50S ribosomal protein L7/L12"/>
    <property type="match status" value="1"/>
</dbReference>
<dbReference type="FunFam" id="3.30.1390.10:FF:000001">
    <property type="entry name" value="50S ribosomal protein L7/L12"/>
    <property type="match status" value="1"/>
</dbReference>
<dbReference type="Gene3D" id="3.30.1390.10">
    <property type="match status" value="1"/>
</dbReference>
<dbReference type="Gene3D" id="1.20.5.710">
    <property type="entry name" value="Single helix bin"/>
    <property type="match status" value="1"/>
</dbReference>
<dbReference type="HAMAP" id="MF_00368">
    <property type="entry name" value="Ribosomal_bL12"/>
    <property type="match status" value="1"/>
</dbReference>
<dbReference type="InterPro" id="IPR000206">
    <property type="entry name" value="Ribosomal_bL12"/>
</dbReference>
<dbReference type="InterPro" id="IPR013823">
    <property type="entry name" value="Ribosomal_bL12_C"/>
</dbReference>
<dbReference type="InterPro" id="IPR014719">
    <property type="entry name" value="Ribosomal_bL12_C/ClpS-like"/>
</dbReference>
<dbReference type="InterPro" id="IPR008932">
    <property type="entry name" value="Ribosomal_bL12_oligo"/>
</dbReference>
<dbReference type="InterPro" id="IPR036235">
    <property type="entry name" value="Ribosomal_bL12_oligo_N_sf"/>
</dbReference>
<dbReference type="NCBIfam" id="TIGR00855">
    <property type="entry name" value="L12"/>
    <property type="match status" value="1"/>
</dbReference>
<dbReference type="PANTHER" id="PTHR45987">
    <property type="entry name" value="39S RIBOSOMAL PROTEIN L12"/>
    <property type="match status" value="1"/>
</dbReference>
<dbReference type="PANTHER" id="PTHR45987:SF4">
    <property type="entry name" value="LARGE RIBOSOMAL SUBUNIT PROTEIN BL12M"/>
    <property type="match status" value="1"/>
</dbReference>
<dbReference type="Pfam" id="PF00542">
    <property type="entry name" value="Ribosomal_L12"/>
    <property type="match status" value="1"/>
</dbReference>
<dbReference type="Pfam" id="PF16320">
    <property type="entry name" value="Ribosomal_L12_N"/>
    <property type="match status" value="1"/>
</dbReference>
<dbReference type="SUPFAM" id="SSF54736">
    <property type="entry name" value="ClpS-like"/>
    <property type="match status" value="1"/>
</dbReference>
<dbReference type="SUPFAM" id="SSF48300">
    <property type="entry name" value="Ribosomal protein L7/12, oligomerisation (N-terminal) domain"/>
    <property type="match status" value="1"/>
</dbReference>
<reference key="1">
    <citation type="journal article" date="2010" name="Genome Biol.">
        <title>Structure and dynamics of the pan-genome of Streptococcus pneumoniae and closely related species.</title>
        <authorList>
            <person name="Donati C."/>
            <person name="Hiller N.L."/>
            <person name="Tettelin H."/>
            <person name="Muzzi A."/>
            <person name="Croucher N.J."/>
            <person name="Angiuoli S.V."/>
            <person name="Oggioni M."/>
            <person name="Dunning Hotopp J.C."/>
            <person name="Hu F.Z."/>
            <person name="Riley D.R."/>
            <person name="Covacci A."/>
            <person name="Mitchell T.J."/>
            <person name="Bentley S.D."/>
            <person name="Kilian M."/>
            <person name="Ehrlich G.D."/>
            <person name="Rappuoli R."/>
            <person name="Moxon E.R."/>
            <person name="Masignani V."/>
        </authorList>
    </citation>
    <scope>NUCLEOTIDE SEQUENCE [LARGE SCALE GENOMIC DNA]</scope>
    <source>
        <strain>JJA</strain>
    </source>
</reference>
<protein>
    <recommendedName>
        <fullName evidence="1">Large ribosomal subunit protein bL12</fullName>
    </recommendedName>
    <alternativeName>
        <fullName evidence="2">50S ribosomal protein L7/L12</fullName>
    </alternativeName>
</protein>
<proteinExistence type="inferred from homology"/>
<gene>
    <name evidence="1" type="primary">rplL</name>
    <name type="ordered locus">SPJ_1254</name>
</gene>
<sequence>MALNIENIIAEIKEASILELNDLVKAIEEEFGVTAAAPVAVAAADAADAGAAKDSFDVELTSAGDKKVGVIKVVREITGLGLKEAKELVDGAPALVKEGVATAEAEEIKAKLEEAGASVTLK</sequence>
<feature type="chain" id="PRO_1000133866" description="Large ribosomal subunit protein bL12">
    <location>
        <begin position="1"/>
        <end position="122"/>
    </location>
</feature>
<name>RL7_STRZJ</name>